<name>Y149_UREPA</name>
<organism>
    <name type="scientific">Ureaplasma parvum serovar 3 (strain ATCC 700970)</name>
    <dbReference type="NCBI Taxonomy" id="273119"/>
    <lineage>
        <taxon>Bacteria</taxon>
        <taxon>Bacillati</taxon>
        <taxon>Mycoplasmatota</taxon>
        <taxon>Mycoplasmoidales</taxon>
        <taxon>Mycoplasmoidaceae</taxon>
        <taxon>Ureaplasma</taxon>
    </lineage>
</organism>
<gene>
    <name type="ordered locus">UU149</name>
</gene>
<reference key="1">
    <citation type="journal article" date="2000" name="Nature">
        <title>The complete sequence of the mucosal pathogen Ureaplasma urealyticum.</title>
        <authorList>
            <person name="Glass J.I."/>
            <person name="Lefkowitz E.J."/>
            <person name="Glass J.S."/>
            <person name="Heiner C.R."/>
            <person name="Chen E.Y."/>
            <person name="Cassell G.H."/>
        </authorList>
    </citation>
    <scope>NUCLEOTIDE SEQUENCE [LARGE SCALE GENOMIC DNA]</scope>
    <source>
        <strain>ATCC 700970</strain>
    </source>
</reference>
<accession>Q9PQZ5</accession>
<feature type="chain" id="PRO_0000220808" description="Uncharacterized protein UU149">
    <location>
        <begin position="1"/>
        <end position="98"/>
    </location>
</feature>
<proteinExistence type="predicted"/>
<dbReference type="EMBL" id="AF222894">
    <property type="protein sequence ID" value="AAF30555.1"/>
    <property type="molecule type" value="Genomic_DNA"/>
</dbReference>
<dbReference type="RefSeq" id="WP_010891688.1">
    <property type="nucleotide sequence ID" value="NC_002162.1"/>
</dbReference>
<dbReference type="SMR" id="Q9PQZ5"/>
<dbReference type="STRING" id="273119.UU149"/>
<dbReference type="EnsemblBacteria" id="AAF30555">
    <property type="protein sequence ID" value="AAF30555"/>
    <property type="gene ID" value="UU149"/>
</dbReference>
<dbReference type="GeneID" id="29672161"/>
<dbReference type="KEGG" id="uur:UU149"/>
<dbReference type="PATRIC" id="fig|273119.6.peg.155"/>
<dbReference type="HOGENOM" id="CLU_2332812_0_0_14"/>
<dbReference type="OrthoDB" id="9868301at2"/>
<dbReference type="Proteomes" id="UP000000423">
    <property type="component" value="Chromosome"/>
</dbReference>
<sequence length="98" mass="11457">MEKIVGFIVNIINVQKQMIKDLKELKNHKDIMVKDHEKLNDMLNSMIDEAVKNYKIALKNITEILNVHLNCVLYNHNLKCGVKDEKLLLPLFKRKKAS</sequence>
<keyword id="KW-1185">Reference proteome</keyword>
<protein>
    <recommendedName>
        <fullName>Uncharacterized protein UU149</fullName>
    </recommendedName>
</protein>